<gene>
    <name type="primary">ask</name>
    <name type="synonym">askAB</name>
</gene>
<evidence type="ECO:0000250" key="1"/>
<evidence type="ECO:0000255" key="2">
    <source>
        <dbReference type="PROSITE-ProRule" id="PRU01007"/>
    </source>
</evidence>
<evidence type="ECO:0000269" key="3">
    <source>
    </source>
</evidence>
<evidence type="ECO:0000269" key="4">
    <source>
    </source>
</evidence>
<evidence type="ECO:0000269" key="5">
    <source>
    </source>
</evidence>
<evidence type="ECO:0000269" key="6">
    <source>
    </source>
</evidence>
<evidence type="ECO:0000305" key="7"/>
<evidence type="ECO:0007829" key="8">
    <source>
        <dbReference type="PDB" id="2DT9"/>
    </source>
</evidence>
<sequence length="405" mass="43319">MALVVQKYGGTSVGDLERIHKVAQRIAHYREKGHRLAVVVSAMGHTTDELIALAKRVNPRPPFRELDLLTTTGEQVSVALLSMQLWAMGIPAKGFVQHQIGITTDGRYGDARILEVNPARIREALDQGFVAVIAGFMGTTPEGEITTLGRGGSDTTAVAIAAALGAKECEIYTDTEGVYTTDPHLIPEARKLSVIGYDQMLEMAALGARVLHPRAVYYAKRYGVVLHVRSSFSYNPGTLVKEVAMEMDKAVTGVALDLDHAQIGLIGIPDQPGIAAKVFQALAERGIAVDMIIQGVPGHDPSRQQMAFTVKKDFAQEALEALEPVLAEIGGEAILRPDIAKVSIVGVGLASTPEVPAKMFQAVASTGANIEMIATSEVRISVIIPAEYAEAALRAVHQAFELDKA</sequence>
<comment type="function">
    <text evidence="4 6">Catalyzes the phosphorylation of the beta-carboxyl group of aspartic acid with ATP to yield 4-phospho-L-aspartate, which is involved in the branched biosynthetic pathway leading to the biosynthesis of amino acids threonine, isoleucine and methionine.</text>
</comment>
<comment type="catalytic activity">
    <reaction evidence="4 6">
        <text>L-aspartate + ATP = 4-phospho-L-aspartate + ADP</text>
        <dbReference type="Rhea" id="RHEA:23776"/>
        <dbReference type="ChEBI" id="CHEBI:29991"/>
        <dbReference type="ChEBI" id="CHEBI:30616"/>
        <dbReference type="ChEBI" id="CHEBI:57535"/>
        <dbReference type="ChEBI" id="CHEBI:456216"/>
        <dbReference type="EC" id="2.7.2.4"/>
    </reaction>
</comment>
<comment type="activity regulation">
    <text evidence="3 4 6">Inhibited by threonine.</text>
</comment>
<comment type="biophysicochemical properties">
    <kinetics>
        <KM evidence="4">0.27 mM for aspartate</KM>
        <KM evidence="4">0.5 mM for ATP</KM>
        <text>kcat is 1500 min(-1).</text>
    </kinetics>
    <temperatureDependence>
        <text evidence="4">Thermostable.</text>
    </temperatureDependence>
</comment>
<comment type="pathway">
    <text>Amino-acid biosynthesis; L-lysine biosynthesis via DAP pathway; (S)-tetrahydrodipicolinate from L-aspartate: step 1/4.</text>
</comment>
<comment type="pathway">
    <text>Amino-acid biosynthesis; L-methionine biosynthesis via de novo pathway; L-homoserine from L-aspartate: step 1/3.</text>
</comment>
<comment type="pathway">
    <text>Amino-acid biosynthesis; L-threonine biosynthesis; L-threonine from L-aspartate: step 1/5.</text>
</comment>
<comment type="subunit">
    <text evidence="3 5">Heterotetramer consisting of 2 isoforms Alpha (catalytic and regulation) and of a homodimer of 2 isoforms Beta (regulation and thermostability).</text>
</comment>
<comment type="alternative products">
    <event type="alternative initiation"/>
    <isoform>
        <id>P61489-1</id>
        <name>Alpha</name>
        <name>Aspartokinase subunit alpha</name>
        <sequence type="displayed"/>
    </isoform>
    <isoform>
        <id>P61489-2</id>
        <name>Beta</name>
        <name>Aspartokinase subunit beta</name>
        <sequence type="described" ref="VSP_018665"/>
    </isoform>
</comment>
<comment type="similarity">
    <text evidence="7">Belongs to the aspartokinase family.</text>
</comment>
<feature type="chain" id="PRO_0000002389" description="Aspartokinase">
    <location>
        <begin position="1"/>
        <end position="405"/>
    </location>
</feature>
<feature type="domain" description="ACT 1" evidence="2">
    <location>
        <begin position="263"/>
        <end position="342"/>
    </location>
</feature>
<feature type="domain" description="ACT 2" evidence="2">
    <location>
        <begin position="344"/>
        <end position="405"/>
    </location>
</feature>
<feature type="binding site" evidence="1">
    <location>
        <begin position="7"/>
        <end position="10"/>
    </location>
    <ligand>
        <name>ATP</name>
        <dbReference type="ChEBI" id="CHEBI:30616"/>
    </ligand>
</feature>
<feature type="binding site" evidence="1">
    <location>
        <begin position="25"/>
        <end position="30"/>
    </location>
    <ligand>
        <name>substrate</name>
    </ligand>
</feature>
<feature type="binding site" evidence="1">
    <location>
        <position position="41"/>
    </location>
    <ligand>
        <name>ATP</name>
        <dbReference type="ChEBI" id="CHEBI:30616"/>
    </ligand>
</feature>
<feature type="binding site" evidence="1">
    <location>
        <begin position="47"/>
        <end position="49"/>
    </location>
    <ligand>
        <name>substrate</name>
    </ligand>
</feature>
<feature type="binding site" evidence="1">
    <location>
        <position position="74"/>
    </location>
    <ligand>
        <name>substrate</name>
    </ligand>
</feature>
<feature type="binding site" evidence="1">
    <location>
        <begin position="125"/>
        <end position="126"/>
    </location>
    <ligand>
        <name>substrate</name>
    </ligand>
</feature>
<feature type="binding site" evidence="1">
    <location>
        <begin position="150"/>
        <end position="153"/>
    </location>
    <ligand>
        <name>substrate</name>
    </ligand>
</feature>
<feature type="binding site" evidence="1">
    <location>
        <position position="153"/>
    </location>
    <ligand>
        <name>substrate</name>
    </ligand>
</feature>
<feature type="binding site" evidence="1">
    <location>
        <begin position="173"/>
        <end position="174"/>
    </location>
    <ligand>
        <name>ATP</name>
        <dbReference type="ChEBI" id="CHEBI:30616"/>
    </ligand>
</feature>
<feature type="binding site" evidence="1">
    <location>
        <begin position="179"/>
        <end position="184"/>
    </location>
    <ligand>
        <name>ATP</name>
        <dbReference type="ChEBI" id="CHEBI:30616"/>
    </ligand>
</feature>
<feature type="binding site" evidence="1">
    <location>
        <position position="209"/>
    </location>
    <ligand>
        <name>ATP</name>
        <dbReference type="ChEBI" id="CHEBI:30616"/>
    </ligand>
</feature>
<feature type="binding site">
    <location>
        <position position="270"/>
    </location>
    <ligand>
        <name>substrate</name>
    </ligand>
</feature>
<feature type="binding site">
    <location>
        <begin position="274"/>
        <end position="275"/>
    </location>
    <ligand>
        <name>substrate</name>
    </ligand>
</feature>
<feature type="binding site" evidence="1">
    <location>
        <begin position="288"/>
        <end position="290"/>
    </location>
    <ligand>
        <name>substrate</name>
    </ligand>
</feature>
<feature type="binding site">
    <location>
        <position position="294"/>
    </location>
    <ligand>
        <name>substrate</name>
    </ligand>
</feature>
<feature type="binding site" evidence="1">
    <location>
        <begin position="355"/>
        <end position="356"/>
    </location>
    <ligand>
        <name>substrate</name>
    </ligand>
</feature>
<feature type="binding site">
    <location>
        <begin position="369"/>
        <end position="370"/>
    </location>
    <ligand>
        <name>substrate</name>
    </ligand>
</feature>
<feature type="binding site" evidence="1">
    <location>
        <begin position="376"/>
        <end position="377"/>
    </location>
    <ligand>
        <name>substrate</name>
    </ligand>
</feature>
<feature type="site" description="Contribution to the catalysis">
    <location>
        <position position="7"/>
    </location>
</feature>
<feature type="site" description="Contribution to the catalysis">
    <location>
        <position position="74"/>
    </location>
</feature>
<feature type="splice variant" id="VSP_018665" description="In isoform Beta." evidence="7">
    <location>
        <begin position="1"/>
        <end position="244"/>
    </location>
</feature>
<feature type="mutagenesis site" description="Loss of aspartokinase activity." evidence="4">
    <original>K</original>
    <variation>A</variation>
    <location>
        <position position="7"/>
    </location>
</feature>
<feature type="mutagenesis site" description="Loss of aspartokinase activity." evidence="4">
    <original>K</original>
    <variation>M</variation>
    <location>
        <position position="7"/>
    </location>
</feature>
<feature type="mutagenesis site" description="Loss of aspartokinase activity." evidence="4">
    <original>G</original>
    <variation>M</variation>
    <location>
        <position position="9"/>
    </location>
</feature>
<feature type="mutagenesis site" description="Significant decrease in the catalytic efficiency." evidence="4">
    <original>G</original>
    <variation>A</variation>
    <location>
        <position position="10"/>
    </location>
</feature>
<feature type="mutagenesis site" description="Significant decrease in the catalytic efficiency. Requires higher concentration of magnesium ion than wild-type." evidence="4">
    <original>S</original>
    <variation>A</variation>
    <location>
        <position position="41"/>
    </location>
</feature>
<feature type="mutagenesis site" description="Loss of aspartokinase activity." evidence="4">
    <original>A</original>
    <variation>S</variation>
    <location>
        <position position="42"/>
    </location>
</feature>
<feature type="mutagenesis site" description="Significant decrease in the affinity for aspartic acid. Requires higher concentration of magnesium ion than wild-type." evidence="4">
    <original>T</original>
    <variation>A</variation>
    <location>
        <position position="47"/>
    </location>
</feature>
<feature type="mutagenesis site" description="Loss of aspartokinase activity." evidence="4">
    <original>E</original>
    <variation>A</variation>
    <location>
        <position position="74"/>
    </location>
</feature>
<feature type="mutagenesis site" description="Loss of aspartokinase activity." evidence="4">
    <original>E</original>
    <variation>Q</variation>
    <location>
        <position position="74"/>
    </location>
</feature>
<feature type="mutagenesis site" description="Very low catalytic efficiency." evidence="4">
    <original>G</original>
    <variation>A</variation>
    <location>
        <position position="135"/>
    </location>
</feature>
<feature type="mutagenesis site" description="Loss of aspartokinase activity." evidence="4">
    <original>G</original>
    <variation>S</variation>
    <location>
        <position position="135"/>
    </location>
</feature>
<feature type="mutagenesis site" description="Significant decrease in the catalytic efficiency." evidence="4">
    <original>R</original>
    <variation>A</variation>
    <location>
        <position position="150"/>
    </location>
</feature>
<feature type="mutagenesis site" description="Significant decrease in the catalytic efficiency. Requires higher concentration of magnesium ion than wild-type." evidence="4">
    <original>D</original>
    <variation>A</variation>
    <location>
        <position position="154"/>
    </location>
</feature>
<feature type="mutagenesis site" description="Significant decrease in the catalytic efficiency. Requires higher concentration of magnesium ion than wild-type." evidence="4">
    <original>D</original>
    <variation>N</variation>
    <location>
        <position position="154"/>
    </location>
</feature>
<feature type="mutagenesis site" description="Significant decrease in the catalytic efficiency." evidence="4">
    <original>D</original>
    <variation>A</variation>
    <location>
        <position position="174"/>
    </location>
</feature>
<feature type="mutagenesis site" description="Significant decrease in the catalytic efficiency. Requires higher concentration of magnesium ion than wild-type." evidence="4">
    <original>D</original>
    <variation>A</variation>
    <location>
        <position position="182"/>
    </location>
</feature>
<feature type="strand" evidence="8">
    <location>
        <begin position="251"/>
        <end position="257"/>
    </location>
</feature>
<feature type="strand" evidence="8">
    <location>
        <begin position="259"/>
        <end position="269"/>
    </location>
</feature>
<feature type="helix" evidence="8">
    <location>
        <begin position="274"/>
        <end position="285"/>
    </location>
</feature>
<feature type="strand" evidence="8">
    <location>
        <begin position="292"/>
        <end position="294"/>
    </location>
</feature>
<feature type="strand" evidence="8">
    <location>
        <begin position="303"/>
        <end position="311"/>
    </location>
</feature>
<feature type="helix" evidence="8">
    <location>
        <begin position="312"/>
        <end position="314"/>
    </location>
</feature>
<feature type="helix" evidence="8">
    <location>
        <begin position="315"/>
        <end position="329"/>
    </location>
</feature>
<feature type="strand" evidence="8">
    <location>
        <begin position="332"/>
        <end position="336"/>
    </location>
</feature>
<feature type="strand" evidence="8">
    <location>
        <begin position="338"/>
        <end position="348"/>
    </location>
</feature>
<feature type="helix" evidence="8">
    <location>
        <begin position="349"/>
        <end position="351"/>
    </location>
</feature>
<feature type="helix" evidence="8">
    <location>
        <begin position="354"/>
        <end position="365"/>
    </location>
</feature>
<feature type="strand" evidence="8">
    <location>
        <begin position="372"/>
        <end position="375"/>
    </location>
</feature>
<feature type="strand" evidence="8">
    <location>
        <begin position="377"/>
        <end position="385"/>
    </location>
</feature>
<feature type="helix" evidence="8">
    <location>
        <begin position="386"/>
        <end position="388"/>
    </location>
</feature>
<feature type="helix" evidence="8">
    <location>
        <begin position="389"/>
        <end position="399"/>
    </location>
</feature>
<dbReference type="EC" id="2.7.2.4"/>
<dbReference type="EMBL" id="D37928">
    <property type="protein sequence ID" value="BAA07146.1"/>
    <property type="molecule type" value="Genomic_DNA"/>
</dbReference>
<dbReference type="EMBL" id="D37928">
    <property type="protein sequence ID" value="BAA07147.1"/>
    <property type="molecule type" value="Genomic_DNA"/>
</dbReference>
<dbReference type="RefSeq" id="WP_024118988.1">
    <property type="nucleotide sequence ID" value="NZ_AP024270.1"/>
</dbReference>
<dbReference type="PDB" id="2DT9">
    <property type="method" value="X-ray"/>
    <property type="resolution" value="2.15 A"/>
    <property type="chains" value="A/B=245-405"/>
</dbReference>
<dbReference type="PDB" id="2ZHO">
    <property type="method" value="X-ray"/>
    <property type="resolution" value="2.98 A"/>
    <property type="chains" value="A/B/C/D/E/F=245-405"/>
</dbReference>
<dbReference type="PDBsum" id="2DT9"/>
<dbReference type="PDBsum" id="2ZHO"/>
<dbReference type="SMR" id="P61489"/>
<dbReference type="BRENDA" id="2.7.2.4">
    <property type="organism ID" value="2305"/>
</dbReference>
<dbReference type="SABIO-RK" id="P61489"/>
<dbReference type="UniPathway" id="UPA00034">
    <property type="reaction ID" value="UER00015"/>
</dbReference>
<dbReference type="UniPathway" id="UPA00050">
    <property type="reaction ID" value="UER00461"/>
</dbReference>
<dbReference type="UniPathway" id="UPA00051">
    <property type="reaction ID" value="UER00462"/>
</dbReference>
<dbReference type="EvolutionaryTrace" id="P61489"/>
<dbReference type="GO" id="GO:0005829">
    <property type="term" value="C:cytosol"/>
    <property type="evidence" value="ECO:0007669"/>
    <property type="project" value="TreeGrafter"/>
</dbReference>
<dbReference type="GO" id="GO:0004072">
    <property type="term" value="F:aspartate kinase activity"/>
    <property type="evidence" value="ECO:0007669"/>
    <property type="project" value="UniProtKB-EC"/>
</dbReference>
<dbReference type="GO" id="GO:0005524">
    <property type="term" value="F:ATP binding"/>
    <property type="evidence" value="ECO:0007669"/>
    <property type="project" value="UniProtKB-KW"/>
</dbReference>
<dbReference type="GO" id="GO:0019877">
    <property type="term" value="P:diaminopimelate biosynthetic process"/>
    <property type="evidence" value="ECO:0007669"/>
    <property type="project" value="UniProtKB-KW"/>
</dbReference>
<dbReference type="GO" id="GO:0009090">
    <property type="term" value="P:homoserine biosynthetic process"/>
    <property type="evidence" value="ECO:0007669"/>
    <property type="project" value="TreeGrafter"/>
</dbReference>
<dbReference type="GO" id="GO:0009089">
    <property type="term" value="P:lysine biosynthetic process via diaminopimelate"/>
    <property type="evidence" value="ECO:0007669"/>
    <property type="project" value="UniProtKB-UniPathway"/>
</dbReference>
<dbReference type="GO" id="GO:0009088">
    <property type="term" value="P:threonine biosynthetic process"/>
    <property type="evidence" value="ECO:0007669"/>
    <property type="project" value="UniProtKB-UniPathway"/>
</dbReference>
<dbReference type="CDD" id="cd04261">
    <property type="entry name" value="AAK_AKii-LysC-BS"/>
    <property type="match status" value="1"/>
</dbReference>
<dbReference type="CDD" id="cd04923">
    <property type="entry name" value="ACT_AK-LysC-DapG-like_2"/>
    <property type="match status" value="1"/>
</dbReference>
<dbReference type="CDD" id="cd04913">
    <property type="entry name" value="ACT_AKii-LysC-BS-like_1"/>
    <property type="match status" value="1"/>
</dbReference>
<dbReference type="FunFam" id="3.40.1160.10:FF:000002">
    <property type="entry name" value="Aspartokinase"/>
    <property type="match status" value="1"/>
</dbReference>
<dbReference type="FunFam" id="3.30.2130.10:FF:000001">
    <property type="entry name" value="Bifunctional aspartokinase/homoserine dehydrogenase"/>
    <property type="match status" value="1"/>
</dbReference>
<dbReference type="Gene3D" id="3.30.70.260">
    <property type="match status" value="2"/>
</dbReference>
<dbReference type="Gene3D" id="3.40.1160.10">
    <property type="entry name" value="Acetylglutamate kinase-like"/>
    <property type="match status" value="1"/>
</dbReference>
<dbReference type="InterPro" id="IPR036393">
    <property type="entry name" value="AceGlu_kinase-like_sf"/>
</dbReference>
<dbReference type="InterPro" id="IPR045865">
    <property type="entry name" value="ACT-like_dom_sf"/>
</dbReference>
<dbReference type="InterPro" id="IPR054352">
    <property type="entry name" value="ACT_Aspartokinase"/>
</dbReference>
<dbReference type="InterPro" id="IPR002912">
    <property type="entry name" value="ACT_dom"/>
</dbReference>
<dbReference type="InterPro" id="IPR041740">
    <property type="entry name" value="AKii-LysC-BS"/>
</dbReference>
<dbReference type="InterPro" id="IPR001048">
    <property type="entry name" value="Asp/Glu/Uridylate_kinase"/>
</dbReference>
<dbReference type="InterPro" id="IPR005260">
    <property type="entry name" value="Asp_kin_monofn"/>
</dbReference>
<dbReference type="InterPro" id="IPR001341">
    <property type="entry name" value="Asp_kinase"/>
</dbReference>
<dbReference type="InterPro" id="IPR018042">
    <property type="entry name" value="Aspartate_kinase_CS"/>
</dbReference>
<dbReference type="NCBIfam" id="TIGR00656">
    <property type="entry name" value="asp_kin_monofn"/>
    <property type="match status" value="1"/>
</dbReference>
<dbReference type="NCBIfam" id="TIGR00657">
    <property type="entry name" value="asp_kinases"/>
    <property type="match status" value="1"/>
</dbReference>
<dbReference type="NCBIfam" id="NF005154">
    <property type="entry name" value="PRK06635.1-2"/>
    <property type="match status" value="1"/>
</dbReference>
<dbReference type="NCBIfam" id="NF005155">
    <property type="entry name" value="PRK06635.1-4"/>
    <property type="match status" value="1"/>
</dbReference>
<dbReference type="PANTHER" id="PTHR21499">
    <property type="entry name" value="ASPARTATE KINASE"/>
    <property type="match status" value="1"/>
</dbReference>
<dbReference type="PANTHER" id="PTHR21499:SF3">
    <property type="entry name" value="ASPARTOKINASE"/>
    <property type="match status" value="1"/>
</dbReference>
<dbReference type="Pfam" id="PF00696">
    <property type="entry name" value="AA_kinase"/>
    <property type="match status" value="1"/>
</dbReference>
<dbReference type="Pfam" id="PF22468">
    <property type="entry name" value="ACT_9"/>
    <property type="match status" value="2"/>
</dbReference>
<dbReference type="PIRSF" id="PIRSF000726">
    <property type="entry name" value="Asp_kin"/>
    <property type="match status" value="1"/>
</dbReference>
<dbReference type="SUPFAM" id="SSF55021">
    <property type="entry name" value="ACT-like"/>
    <property type="match status" value="2"/>
</dbReference>
<dbReference type="SUPFAM" id="SSF53633">
    <property type="entry name" value="Carbamate kinase-like"/>
    <property type="match status" value="1"/>
</dbReference>
<dbReference type="PROSITE" id="PS51671">
    <property type="entry name" value="ACT"/>
    <property type="match status" value="1"/>
</dbReference>
<dbReference type="PROSITE" id="PS00324">
    <property type="entry name" value="ASPARTOKINASE"/>
    <property type="match status" value="1"/>
</dbReference>
<protein>
    <recommendedName>
        <fullName>Aspartokinase</fullName>
        <ecNumber>2.7.2.4</ecNumber>
    </recommendedName>
    <alternativeName>
        <fullName>Aspartate kinase</fullName>
        <shortName>AK</shortName>
        <shortName>ASK</shortName>
    </alternativeName>
    <alternativeName>
        <fullName>Threonine-sensitive AK</fullName>
        <shortName>ThrA</shortName>
    </alternativeName>
</protein>
<proteinExistence type="evidence at protein level"/>
<reference key="1">
    <citation type="journal article" date="1995" name="Microbiology">
        <title>An operon encoding aspartokinase and purine phosphoribosyltransferase in Thermus flavus.</title>
        <authorList>
            <person name="Nishiyama M."/>
            <person name="Kukimoto M."/>
            <person name="Beppu T."/>
            <person name="Horiouchi S."/>
        </authorList>
    </citation>
    <scope>NUCLEOTIDE SEQUENCE [GENOMIC DNA]</scope>
    <scope>FUNCTION</scope>
    <scope>CATALYTIC ACTIVITY</scope>
    <scope>ACTIVITY REGULATION</scope>
    <scope>NOMENCLATURE</scope>
    <source>
        <strain>ATCC 33923 / DSM 674 / AT-62</strain>
    </source>
</reference>
<reference key="2">
    <citation type="journal article" date="1999" name="J. Biosci. Bioeng.">
        <title>Kinetic and mutation analyses of aspartate kinase from Thermus flavus.</title>
        <authorList>
            <person name="Kobashi N."/>
            <person name="Nishiyama M."/>
            <person name="Tanokura M."/>
        </authorList>
    </citation>
    <scope>FUNCTION</scope>
    <scope>CATALYTIC ACTIVITY</scope>
    <scope>MUTAGENESIS OF LYS-7; GLY-9; GLY-10; SER-41; ALA-42; THR-47; GLU-74; GLY-135; ARG-150; ASP-154; ASP-174 AND ASP-182</scope>
    <scope>BIOPHYSICOCHEMICAL PROPERTIES</scope>
    <scope>ACTIVITY REGULATION</scope>
</reference>
<reference key="3">
    <citation type="journal article" date="2004" name="Biochem. Biophys. Res. Commun.">
        <title>Conversion of feedback regulation in aspartate kinase by domain exchange.</title>
        <authorList>
            <person name="Kato C."/>
            <person name="Kurihara T."/>
            <person name="Kobashi N."/>
            <person name="Yamane H."/>
            <person name="Nishiyama M."/>
        </authorList>
    </citation>
    <scope>ACTIVITY REGULATION</scope>
    <scope>SUBUNIT</scope>
</reference>
<reference key="4">
    <citation type="journal article" date="2009" name="FEBS J.">
        <title>Crystal structures of the regulatory subunit of Thr-sensitive aspartate kinase from Thermus thermophilus.</title>
        <authorList>
            <person name="Yoshida A."/>
            <person name="Tomita T."/>
            <person name="Kono H."/>
            <person name="Fushinobu S."/>
            <person name="Kuzuyama T."/>
            <person name="Nishiyama M."/>
        </authorList>
    </citation>
    <scope>X-RAY CRYSTALLOGRAPHY (2.15 ANGSTROMS) OF 245-405 IN COMPLEX WITH SUBSTRATE ANALOGS</scope>
    <scope>SUBUNIT</scope>
</reference>
<name>AK_THETH</name>
<keyword id="KW-0002">3D-structure</keyword>
<keyword id="KW-0024">Alternative initiation</keyword>
<keyword id="KW-0028">Amino-acid biosynthesis</keyword>
<keyword id="KW-0067">ATP-binding</keyword>
<keyword id="KW-0220">Diaminopimelate biosynthesis</keyword>
<keyword id="KW-0418">Kinase</keyword>
<keyword id="KW-0457">Lysine biosynthesis</keyword>
<keyword id="KW-0547">Nucleotide-binding</keyword>
<keyword id="KW-0677">Repeat</keyword>
<keyword id="KW-0808">Transferase</keyword>
<organism>
    <name type="scientific">Thermus thermophilus</name>
    <dbReference type="NCBI Taxonomy" id="274"/>
    <lineage>
        <taxon>Bacteria</taxon>
        <taxon>Thermotogati</taxon>
        <taxon>Deinococcota</taxon>
        <taxon>Deinococci</taxon>
        <taxon>Thermales</taxon>
        <taxon>Thermaceae</taxon>
        <taxon>Thermus</taxon>
    </lineage>
</organism>
<accession>P61489</accession>
<accession>P77991</accession>
<accession>P97151</accession>